<name>SYH_YERPP</name>
<organism>
    <name type="scientific">Yersinia pestis (strain Pestoides F)</name>
    <dbReference type="NCBI Taxonomy" id="386656"/>
    <lineage>
        <taxon>Bacteria</taxon>
        <taxon>Pseudomonadati</taxon>
        <taxon>Pseudomonadota</taxon>
        <taxon>Gammaproteobacteria</taxon>
        <taxon>Enterobacterales</taxon>
        <taxon>Yersiniaceae</taxon>
        <taxon>Yersinia</taxon>
    </lineage>
</organism>
<protein>
    <recommendedName>
        <fullName evidence="1">Histidine--tRNA ligase</fullName>
        <ecNumber evidence="1">6.1.1.21</ecNumber>
    </recommendedName>
    <alternativeName>
        <fullName evidence="1">Histidyl-tRNA synthetase</fullName>
        <shortName evidence="1">HisRS</shortName>
    </alternativeName>
</protein>
<keyword id="KW-0030">Aminoacyl-tRNA synthetase</keyword>
<keyword id="KW-0067">ATP-binding</keyword>
<keyword id="KW-0963">Cytoplasm</keyword>
<keyword id="KW-0436">Ligase</keyword>
<keyword id="KW-0547">Nucleotide-binding</keyword>
<keyword id="KW-0648">Protein biosynthesis</keyword>
<feature type="chain" id="PRO_1000016489" description="Histidine--tRNA ligase">
    <location>
        <begin position="1"/>
        <end position="424"/>
    </location>
</feature>
<proteinExistence type="inferred from homology"/>
<comment type="catalytic activity">
    <reaction evidence="1">
        <text>tRNA(His) + L-histidine + ATP = L-histidyl-tRNA(His) + AMP + diphosphate + H(+)</text>
        <dbReference type="Rhea" id="RHEA:17313"/>
        <dbReference type="Rhea" id="RHEA-COMP:9665"/>
        <dbReference type="Rhea" id="RHEA-COMP:9689"/>
        <dbReference type="ChEBI" id="CHEBI:15378"/>
        <dbReference type="ChEBI" id="CHEBI:30616"/>
        <dbReference type="ChEBI" id="CHEBI:33019"/>
        <dbReference type="ChEBI" id="CHEBI:57595"/>
        <dbReference type="ChEBI" id="CHEBI:78442"/>
        <dbReference type="ChEBI" id="CHEBI:78527"/>
        <dbReference type="ChEBI" id="CHEBI:456215"/>
        <dbReference type="EC" id="6.1.1.21"/>
    </reaction>
</comment>
<comment type="subunit">
    <text evidence="1">Homodimer.</text>
</comment>
<comment type="subcellular location">
    <subcellularLocation>
        <location evidence="1">Cytoplasm</location>
    </subcellularLocation>
</comment>
<comment type="similarity">
    <text evidence="1">Belongs to the class-II aminoacyl-tRNA synthetase family.</text>
</comment>
<evidence type="ECO:0000255" key="1">
    <source>
        <dbReference type="HAMAP-Rule" id="MF_00127"/>
    </source>
</evidence>
<dbReference type="EC" id="6.1.1.21" evidence="1"/>
<dbReference type="EMBL" id="CP000668">
    <property type="protein sequence ID" value="ABP40598.1"/>
    <property type="molecule type" value="Genomic_DNA"/>
</dbReference>
<dbReference type="RefSeq" id="WP_002209816.1">
    <property type="nucleotide sequence ID" value="NZ_CP009715.1"/>
</dbReference>
<dbReference type="SMR" id="A4TMT6"/>
<dbReference type="GeneID" id="57975836"/>
<dbReference type="KEGG" id="ypp:YPDSF_2223"/>
<dbReference type="PATRIC" id="fig|386656.14.peg.3711"/>
<dbReference type="GO" id="GO:0005737">
    <property type="term" value="C:cytoplasm"/>
    <property type="evidence" value="ECO:0007669"/>
    <property type="project" value="UniProtKB-SubCell"/>
</dbReference>
<dbReference type="GO" id="GO:0005524">
    <property type="term" value="F:ATP binding"/>
    <property type="evidence" value="ECO:0007669"/>
    <property type="project" value="UniProtKB-UniRule"/>
</dbReference>
<dbReference type="GO" id="GO:0004821">
    <property type="term" value="F:histidine-tRNA ligase activity"/>
    <property type="evidence" value="ECO:0007669"/>
    <property type="project" value="UniProtKB-UniRule"/>
</dbReference>
<dbReference type="GO" id="GO:0006427">
    <property type="term" value="P:histidyl-tRNA aminoacylation"/>
    <property type="evidence" value="ECO:0007669"/>
    <property type="project" value="UniProtKB-UniRule"/>
</dbReference>
<dbReference type="CDD" id="cd00773">
    <property type="entry name" value="HisRS-like_core"/>
    <property type="match status" value="1"/>
</dbReference>
<dbReference type="CDD" id="cd00859">
    <property type="entry name" value="HisRS_anticodon"/>
    <property type="match status" value="1"/>
</dbReference>
<dbReference type="FunFam" id="3.30.930.10:FF:000005">
    <property type="entry name" value="Histidine--tRNA ligase"/>
    <property type="match status" value="1"/>
</dbReference>
<dbReference type="FunFam" id="3.40.50.800:FF:000007">
    <property type="entry name" value="Histidine--tRNA ligase"/>
    <property type="match status" value="1"/>
</dbReference>
<dbReference type="Gene3D" id="3.40.50.800">
    <property type="entry name" value="Anticodon-binding domain"/>
    <property type="match status" value="1"/>
</dbReference>
<dbReference type="Gene3D" id="3.30.930.10">
    <property type="entry name" value="Bira Bifunctional Protein, Domain 2"/>
    <property type="match status" value="1"/>
</dbReference>
<dbReference type="HAMAP" id="MF_00127">
    <property type="entry name" value="His_tRNA_synth"/>
    <property type="match status" value="1"/>
</dbReference>
<dbReference type="InterPro" id="IPR006195">
    <property type="entry name" value="aa-tRNA-synth_II"/>
</dbReference>
<dbReference type="InterPro" id="IPR045864">
    <property type="entry name" value="aa-tRNA-synth_II/BPL/LPL"/>
</dbReference>
<dbReference type="InterPro" id="IPR004154">
    <property type="entry name" value="Anticodon-bd"/>
</dbReference>
<dbReference type="InterPro" id="IPR036621">
    <property type="entry name" value="Anticodon-bd_dom_sf"/>
</dbReference>
<dbReference type="InterPro" id="IPR015807">
    <property type="entry name" value="His-tRNA-ligase"/>
</dbReference>
<dbReference type="InterPro" id="IPR041715">
    <property type="entry name" value="HisRS-like_core"/>
</dbReference>
<dbReference type="InterPro" id="IPR004516">
    <property type="entry name" value="HisRS/HisZ"/>
</dbReference>
<dbReference type="InterPro" id="IPR033656">
    <property type="entry name" value="HisRS_anticodon"/>
</dbReference>
<dbReference type="NCBIfam" id="TIGR00442">
    <property type="entry name" value="hisS"/>
    <property type="match status" value="1"/>
</dbReference>
<dbReference type="PANTHER" id="PTHR43707:SF1">
    <property type="entry name" value="HISTIDINE--TRNA LIGASE, MITOCHONDRIAL-RELATED"/>
    <property type="match status" value="1"/>
</dbReference>
<dbReference type="PANTHER" id="PTHR43707">
    <property type="entry name" value="HISTIDYL-TRNA SYNTHETASE"/>
    <property type="match status" value="1"/>
</dbReference>
<dbReference type="Pfam" id="PF03129">
    <property type="entry name" value="HGTP_anticodon"/>
    <property type="match status" value="1"/>
</dbReference>
<dbReference type="Pfam" id="PF13393">
    <property type="entry name" value="tRNA-synt_His"/>
    <property type="match status" value="1"/>
</dbReference>
<dbReference type="PIRSF" id="PIRSF001549">
    <property type="entry name" value="His-tRNA_synth"/>
    <property type="match status" value="1"/>
</dbReference>
<dbReference type="SUPFAM" id="SSF52954">
    <property type="entry name" value="Class II aaRS ABD-related"/>
    <property type="match status" value="1"/>
</dbReference>
<dbReference type="SUPFAM" id="SSF55681">
    <property type="entry name" value="Class II aaRS and biotin synthetases"/>
    <property type="match status" value="1"/>
</dbReference>
<dbReference type="PROSITE" id="PS50862">
    <property type="entry name" value="AA_TRNA_LIGASE_II"/>
    <property type="match status" value="1"/>
</dbReference>
<sequence length="424" mass="47262">MAKNIQAIRGMNDYLPADTAIWQRIESILKQVLSGYGYSEIRMPIVEQTPLFKRAIGEVTDVVEKEMYTFDDRNGESLTLRPEGTAGCVRAGIEHGLLYNQEQRLWYIGPMFRYERPQKGRYRQFHQLGAEVFGLPGPDIDAELILLTARWWRALGIFEHVKLELNSIGSLAARADYREALVAFLEQHVEVLDEDCKRRMYSNPLRVLDSKNPDVQQLLDDAPKLSDYLDEESKQHFAGLCELLDKASIPYTVNERLVRGLDYYNRTVFEWVTHSLGAQGTVCAGGRYDGLVEQLGGRATPAVGFAMGLERLVLLVQAVNADFQVPATVDAYVISSGEGAQSAAMLLAESLRDALPTLKIMTNYGGGNVKKQFTRADKWGARVALMLGESEVAAQQVVVKDLRNGEQETLAQADVAARLALMLG</sequence>
<accession>A4TMT6</accession>
<gene>
    <name evidence="1" type="primary">hisS</name>
    <name type="ordered locus">YPDSF_2223</name>
</gene>
<reference key="1">
    <citation type="submission" date="2007-02" db="EMBL/GenBank/DDBJ databases">
        <title>Complete sequence of chromosome of Yersinia pestis Pestoides F.</title>
        <authorList>
            <consortium name="US DOE Joint Genome Institute"/>
            <person name="Copeland A."/>
            <person name="Lucas S."/>
            <person name="Lapidus A."/>
            <person name="Barry K."/>
            <person name="Detter J.C."/>
            <person name="Glavina del Rio T."/>
            <person name="Hammon N."/>
            <person name="Israni S."/>
            <person name="Dalin E."/>
            <person name="Tice H."/>
            <person name="Pitluck S."/>
            <person name="Di Bartolo G."/>
            <person name="Chain P."/>
            <person name="Malfatti S."/>
            <person name="Shin M."/>
            <person name="Vergez L."/>
            <person name="Schmutz J."/>
            <person name="Larimer F."/>
            <person name="Land M."/>
            <person name="Hauser L."/>
            <person name="Worsham P."/>
            <person name="Chu M."/>
            <person name="Bearden S."/>
            <person name="Garcia E."/>
            <person name="Richardson P."/>
        </authorList>
    </citation>
    <scope>NUCLEOTIDE SEQUENCE [LARGE SCALE GENOMIC DNA]</scope>
    <source>
        <strain>Pestoides F</strain>
    </source>
</reference>